<comment type="function">
    <text evidence="1">Located on the platform of the 30S subunit, it bridges several disparate RNA helices of the 16S rRNA. Forms part of the Shine-Dalgarno cleft in the 70S ribosome.</text>
</comment>
<comment type="subunit">
    <text evidence="1">Part of the 30S ribosomal subunit. Interacts with proteins S7 and S18. Binds to IF-3.</text>
</comment>
<comment type="similarity">
    <text evidence="1">Belongs to the universal ribosomal protein uS11 family.</text>
</comment>
<feature type="chain" id="PRO_0000123262" description="Small ribosomal subunit protein uS11">
    <location>
        <begin position="1"/>
        <end position="130"/>
    </location>
</feature>
<gene>
    <name evidence="1" type="primary">rpsK</name>
    <name type="ordered locus">PD_0459</name>
</gene>
<protein>
    <recommendedName>
        <fullName evidence="1">Small ribosomal subunit protein uS11</fullName>
    </recommendedName>
    <alternativeName>
        <fullName evidence="2">30S ribosomal protein S11</fullName>
    </alternativeName>
</protein>
<accession>P59586</accession>
<dbReference type="EMBL" id="AE009442">
    <property type="protein sequence ID" value="AAO28338.1"/>
    <property type="molecule type" value="Genomic_DNA"/>
</dbReference>
<dbReference type="RefSeq" id="WP_004090135.1">
    <property type="nucleotide sequence ID" value="NC_004556.1"/>
</dbReference>
<dbReference type="SMR" id="P59586"/>
<dbReference type="GeneID" id="93904161"/>
<dbReference type="KEGG" id="xft:PD_0459"/>
<dbReference type="HOGENOM" id="CLU_072439_5_0_6"/>
<dbReference type="Proteomes" id="UP000002516">
    <property type="component" value="Chromosome"/>
</dbReference>
<dbReference type="GO" id="GO:1990904">
    <property type="term" value="C:ribonucleoprotein complex"/>
    <property type="evidence" value="ECO:0007669"/>
    <property type="project" value="UniProtKB-KW"/>
</dbReference>
<dbReference type="GO" id="GO:0005840">
    <property type="term" value="C:ribosome"/>
    <property type="evidence" value="ECO:0007669"/>
    <property type="project" value="UniProtKB-KW"/>
</dbReference>
<dbReference type="GO" id="GO:0019843">
    <property type="term" value="F:rRNA binding"/>
    <property type="evidence" value="ECO:0007669"/>
    <property type="project" value="UniProtKB-UniRule"/>
</dbReference>
<dbReference type="GO" id="GO:0003735">
    <property type="term" value="F:structural constituent of ribosome"/>
    <property type="evidence" value="ECO:0007669"/>
    <property type="project" value="InterPro"/>
</dbReference>
<dbReference type="GO" id="GO:0006412">
    <property type="term" value="P:translation"/>
    <property type="evidence" value="ECO:0007669"/>
    <property type="project" value="UniProtKB-UniRule"/>
</dbReference>
<dbReference type="FunFam" id="3.30.420.80:FF:000001">
    <property type="entry name" value="30S ribosomal protein S11"/>
    <property type="match status" value="1"/>
</dbReference>
<dbReference type="Gene3D" id="3.30.420.80">
    <property type="entry name" value="Ribosomal protein S11"/>
    <property type="match status" value="1"/>
</dbReference>
<dbReference type="HAMAP" id="MF_01310">
    <property type="entry name" value="Ribosomal_uS11"/>
    <property type="match status" value="1"/>
</dbReference>
<dbReference type="InterPro" id="IPR001971">
    <property type="entry name" value="Ribosomal_uS11"/>
</dbReference>
<dbReference type="InterPro" id="IPR019981">
    <property type="entry name" value="Ribosomal_uS11_bac-type"/>
</dbReference>
<dbReference type="InterPro" id="IPR018102">
    <property type="entry name" value="Ribosomal_uS11_CS"/>
</dbReference>
<dbReference type="InterPro" id="IPR036967">
    <property type="entry name" value="Ribosomal_uS11_sf"/>
</dbReference>
<dbReference type="NCBIfam" id="NF003698">
    <property type="entry name" value="PRK05309.1"/>
    <property type="match status" value="1"/>
</dbReference>
<dbReference type="NCBIfam" id="TIGR03632">
    <property type="entry name" value="uS11_bact"/>
    <property type="match status" value="1"/>
</dbReference>
<dbReference type="PANTHER" id="PTHR11759">
    <property type="entry name" value="40S RIBOSOMAL PROTEIN S14/30S RIBOSOMAL PROTEIN S11"/>
    <property type="match status" value="1"/>
</dbReference>
<dbReference type="Pfam" id="PF00411">
    <property type="entry name" value="Ribosomal_S11"/>
    <property type="match status" value="1"/>
</dbReference>
<dbReference type="PIRSF" id="PIRSF002131">
    <property type="entry name" value="Ribosomal_S11"/>
    <property type="match status" value="1"/>
</dbReference>
<dbReference type="SUPFAM" id="SSF53137">
    <property type="entry name" value="Translational machinery components"/>
    <property type="match status" value="1"/>
</dbReference>
<dbReference type="PROSITE" id="PS00054">
    <property type="entry name" value="RIBOSOMAL_S11"/>
    <property type="match status" value="1"/>
</dbReference>
<reference key="1">
    <citation type="journal article" date="2003" name="J. Bacteriol.">
        <title>Comparative analyses of the complete genome sequences of Pierce's disease and citrus variegated chlorosis strains of Xylella fastidiosa.</title>
        <authorList>
            <person name="Van Sluys M.A."/>
            <person name="de Oliveira M.C."/>
            <person name="Monteiro-Vitorello C.B."/>
            <person name="Miyaki C.Y."/>
            <person name="Furlan L.R."/>
            <person name="Camargo L.E.A."/>
            <person name="da Silva A.C.R."/>
            <person name="Moon D.H."/>
            <person name="Takita M.A."/>
            <person name="Lemos E.G.M."/>
            <person name="Machado M.A."/>
            <person name="Ferro M.I.T."/>
            <person name="da Silva F.R."/>
            <person name="Goldman M.H.S."/>
            <person name="Goldman G.H."/>
            <person name="Lemos M.V.F."/>
            <person name="El-Dorry H."/>
            <person name="Tsai S.M."/>
            <person name="Carrer H."/>
            <person name="Carraro D.M."/>
            <person name="de Oliveira R.C."/>
            <person name="Nunes L.R."/>
            <person name="Siqueira W.J."/>
            <person name="Coutinho L.L."/>
            <person name="Kimura E.T."/>
            <person name="Ferro E.S."/>
            <person name="Harakava R."/>
            <person name="Kuramae E.E."/>
            <person name="Marino C.L."/>
            <person name="Giglioti E."/>
            <person name="Abreu I.L."/>
            <person name="Alves L.M.C."/>
            <person name="do Amaral A.M."/>
            <person name="Baia G.S."/>
            <person name="Blanco S.R."/>
            <person name="Brito M.S."/>
            <person name="Cannavan F.S."/>
            <person name="Celestino A.V."/>
            <person name="da Cunha A.F."/>
            <person name="Fenille R.C."/>
            <person name="Ferro J.A."/>
            <person name="Formighieri E.F."/>
            <person name="Kishi L.T."/>
            <person name="Leoni S.G."/>
            <person name="Oliveira A.R."/>
            <person name="Rosa V.E. Jr."/>
            <person name="Sassaki F.T."/>
            <person name="Sena J.A.D."/>
            <person name="de Souza A.A."/>
            <person name="Truffi D."/>
            <person name="Tsukumo F."/>
            <person name="Yanai G.M."/>
            <person name="Zaros L.G."/>
            <person name="Civerolo E.L."/>
            <person name="Simpson A.J.G."/>
            <person name="Almeida N.F. Jr."/>
            <person name="Setubal J.C."/>
            <person name="Kitajima J.P."/>
        </authorList>
    </citation>
    <scope>NUCLEOTIDE SEQUENCE [LARGE SCALE GENOMIC DNA]</scope>
    <source>
        <strain>Temecula1 / ATCC 700964</strain>
    </source>
</reference>
<sequence>MSKQSVVKTKKRVKRVITDGVAHICASFNNTIVTITDRQGNSLFWCTSGASGFRGSRKCTPFAAQVAAEKAGRAVLDYGMKSLEVRINGPGPGRESAVRSLSNVGYKITNIIDVTPIPHNGCRPPKKRRV</sequence>
<proteinExistence type="inferred from homology"/>
<evidence type="ECO:0000255" key="1">
    <source>
        <dbReference type="HAMAP-Rule" id="MF_01310"/>
    </source>
</evidence>
<evidence type="ECO:0000305" key="2"/>
<keyword id="KW-1185">Reference proteome</keyword>
<keyword id="KW-0687">Ribonucleoprotein</keyword>
<keyword id="KW-0689">Ribosomal protein</keyword>
<keyword id="KW-0694">RNA-binding</keyword>
<keyword id="KW-0699">rRNA-binding</keyword>
<name>RS11_XYLFT</name>
<organism>
    <name type="scientific">Xylella fastidiosa (strain Temecula1 / ATCC 700964)</name>
    <dbReference type="NCBI Taxonomy" id="183190"/>
    <lineage>
        <taxon>Bacteria</taxon>
        <taxon>Pseudomonadati</taxon>
        <taxon>Pseudomonadota</taxon>
        <taxon>Gammaproteobacteria</taxon>
        <taxon>Lysobacterales</taxon>
        <taxon>Lysobacteraceae</taxon>
        <taxon>Xylella</taxon>
    </lineage>
</organism>